<feature type="chain" id="PRO_1000087116" description="Large ribosomal subunit protein uL14">
    <location>
        <begin position="1"/>
        <end position="122"/>
    </location>
</feature>
<dbReference type="EMBL" id="CP000872">
    <property type="protein sequence ID" value="ABX62295.1"/>
    <property type="molecule type" value="Genomic_DNA"/>
</dbReference>
<dbReference type="RefSeq" id="WP_004683923.1">
    <property type="nucleotide sequence ID" value="NC_010103.1"/>
</dbReference>
<dbReference type="SMR" id="A9M5P0"/>
<dbReference type="GeneID" id="97533534"/>
<dbReference type="KEGG" id="bcs:BCAN_A1246"/>
<dbReference type="HOGENOM" id="CLU_095071_2_1_5"/>
<dbReference type="PhylomeDB" id="A9M5P0"/>
<dbReference type="Proteomes" id="UP000001385">
    <property type="component" value="Chromosome I"/>
</dbReference>
<dbReference type="GO" id="GO:0022625">
    <property type="term" value="C:cytosolic large ribosomal subunit"/>
    <property type="evidence" value="ECO:0007669"/>
    <property type="project" value="TreeGrafter"/>
</dbReference>
<dbReference type="GO" id="GO:0070180">
    <property type="term" value="F:large ribosomal subunit rRNA binding"/>
    <property type="evidence" value="ECO:0007669"/>
    <property type="project" value="TreeGrafter"/>
</dbReference>
<dbReference type="GO" id="GO:0003735">
    <property type="term" value="F:structural constituent of ribosome"/>
    <property type="evidence" value="ECO:0007669"/>
    <property type="project" value="InterPro"/>
</dbReference>
<dbReference type="GO" id="GO:0006412">
    <property type="term" value="P:translation"/>
    <property type="evidence" value="ECO:0007669"/>
    <property type="project" value="UniProtKB-UniRule"/>
</dbReference>
<dbReference type="CDD" id="cd00337">
    <property type="entry name" value="Ribosomal_uL14"/>
    <property type="match status" value="1"/>
</dbReference>
<dbReference type="FunFam" id="2.40.150.20:FF:000001">
    <property type="entry name" value="50S ribosomal protein L14"/>
    <property type="match status" value="1"/>
</dbReference>
<dbReference type="Gene3D" id="2.40.150.20">
    <property type="entry name" value="Ribosomal protein L14"/>
    <property type="match status" value="1"/>
</dbReference>
<dbReference type="HAMAP" id="MF_01367">
    <property type="entry name" value="Ribosomal_uL14"/>
    <property type="match status" value="1"/>
</dbReference>
<dbReference type="InterPro" id="IPR000218">
    <property type="entry name" value="Ribosomal_uL14"/>
</dbReference>
<dbReference type="InterPro" id="IPR005745">
    <property type="entry name" value="Ribosomal_uL14_bac-type"/>
</dbReference>
<dbReference type="InterPro" id="IPR019972">
    <property type="entry name" value="Ribosomal_uL14_CS"/>
</dbReference>
<dbReference type="InterPro" id="IPR036853">
    <property type="entry name" value="Ribosomal_uL14_sf"/>
</dbReference>
<dbReference type="NCBIfam" id="TIGR01067">
    <property type="entry name" value="rplN_bact"/>
    <property type="match status" value="1"/>
</dbReference>
<dbReference type="PANTHER" id="PTHR11761">
    <property type="entry name" value="50S/60S RIBOSOMAL PROTEIN L14/L23"/>
    <property type="match status" value="1"/>
</dbReference>
<dbReference type="PANTHER" id="PTHR11761:SF3">
    <property type="entry name" value="LARGE RIBOSOMAL SUBUNIT PROTEIN UL14M"/>
    <property type="match status" value="1"/>
</dbReference>
<dbReference type="Pfam" id="PF00238">
    <property type="entry name" value="Ribosomal_L14"/>
    <property type="match status" value="1"/>
</dbReference>
<dbReference type="SMART" id="SM01374">
    <property type="entry name" value="Ribosomal_L14"/>
    <property type="match status" value="1"/>
</dbReference>
<dbReference type="SUPFAM" id="SSF50193">
    <property type="entry name" value="Ribosomal protein L14"/>
    <property type="match status" value="1"/>
</dbReference>
<dbReference type="PROSITE" id="PS00049">
    <property type="entry name" value="RIBOSOMAL_L14"/>
    <property type="match status" value="1"/>
</dbReference>
<comment type="function">
    <text evidence="1">Binds to 23S rRNA. Forms part of two intersubunit bridges in the 70S ribosome.</text>
</comment>
<comment type="subunit">
    <text evidence="1">Part of the 50S ribosomal subunit. Forms a cluster with proteins L3 and L19. In the 70S ribosome, L14 and L19 interact and together make contacts with the 16S rRNA in bridges B5 and B8.</text>
</comment>
<comment type="similarity">
    <text evidence="1">Belongs to the universal ribosomal protein uL14 family.</text>
</comment>
<keyword id="KW-1185">Reference proteome</keyword>
<keyword id="KW-0687">Ribonucleoprotein</keyword>
<keyword id="KW-0689">Ribosomal protein</keyword>
<keyword id="KW-0694">RNA-binding</keyword>
<keyword id="KW-0699">rRNA-binding</keyword>
<proteinExistence type="inferred from homology"/>
<name>RL14_BRUC2</name>
<evidence type="ECO:0000255" key="1">
    <source>
        <dbReference type="HAMAP-Rule" id="MF_01367"/>
    </source>
</evidence>
<evidence type="ECO:0000305" key="2"/>
<protein>
    <recommendedName>
        <fullName evidence="1">Large ribosomal subunit protein uL14</fullName>
    </recommendedName>
    <alternativeName>
        <fullName evidence="2">50S ribosomal protein L14</fullName>
    </alternativeName>
</protein>
<accession>A9M5P0</accession>
<sequence length="122" mass="13460">MIQMQTNLDVADNSGARRVMCIKVLGGSKRRYASVGDIIVVSIKEAIPRGRVKKGDVMKAVVVRTAKDIRRPDGSVIRFDNNAAVLIDNKKEPIGTRIFGPVPRELRAKNHMKIISLAPEVL</sequence>
<organism>
    <name type="scientific">Brucella canis (strain ATCC 23365 / NCTC 10854 / RM-666)</name>
    <dbReference type="NCBI Taxonomy" id="483179"/>
    <lineage>
        <taxon>Bacteria</taxon>
        <taxon>Pseudomonadati</taxon>
        <taxon>Pseudomonadota</taxon>
        <taxon>Alphaproteobacteria</taxon>
        <taxon>Hyphomicrobiales</taxon>
        <taxon>Brucellaceae</taxon>
        <taxon>Brucella/Ochrobactrum group</taxon>
        <taxon>Brucella</taxon>
    </lineage>
</organism>
<reference key="1">
    <citation type="submission" date="2007-10" db="EMBL/GenBank/DDBJ databases">
        <title>Brucella canis ATCC 23365 whole genome shotgun sequencing project.</title>
        <authorList>
            <person name="Setubal J.C."/>
            <person name="Bowns C."/>
            <person name="Boyle S."/>
            <person name="Crasta O.R."/>
            <person name="Czar M.J."/>
            <person name="Dharmanolla C."/>
            <person name="Gillespie J.J."/>
            <person name="Kenyon R.W."/>
            <person name="Lu J."/>
            <person name="Mane S."/>
            <person name="Mohapatra S."/>
            <person name="Nagrani S."/>
            <person name="Purkayastha A."/>
            <person name="Rajasimha H.K."/>
            <person name="Shallom J.M."/>
            <person name="Shallom S."/>
            <person name="Shukla M."/>
            <person name="Snyder E.E."/>
            <person name="Sobral B.W."/>
            <person name="Wattam A.R."/>
            <person name="Will R."/>
            <person name="Williams K."/>
            <person name="Yoo H."/>
            <person name="Bruce D."/>
            <person name="Detter C."/>
            <person name="Munk C."/>
            <person name="Brettin T.S."/>
        </authorList>
    </citation>
    <scope>NUCLEOTIDE SEQUENCE [LARGE SCALE GENOMIC DNA]</scope>
    <source>
        <strain>ATCC 23365 / NCTC 10854 / RM-666</strain>
    </source>
</reference>
<gene>
    <name evidence="1" type="primary">rplN</name>
    <name type="ordered locus">BCAN_A1246</name>
</gene>